<name>Y2206_MYCTU</name>
<keyword id="KW-1003">Cell membrane</keyword>
<keyword id="KW-0472">Membrane</keyword>
<keyword id="KW-1185">Reference proteome</keyword>
<keyword id="KW-0812">Transmembrane</keyword>
<keyword id="KW-1133">Transmembrane helix</keyword>
<dbReference type="EMBL" id="AL123456">
    <property type="protein sequence ID" value="CCP44983.1"/>
    <property type="molecule type" value="Genomic_DNA"/>
</dbReference>
<dbReference type="PIR" id="G70785">
    <property type="entry name" value="G70785"/>
</dbReference>
<dbReference type="RefSeq" id="NP_216722.2">
    <property type="nucleotide sequence ID" value="NC_000962.3"/>
</dbReference>
<dbReference type="RefSeq" id="WP_003411425.1">
    <property type="nucleotide sequence ID" value="NZ_NVQJ01000008.1"/>
</dbReference>
<dbReference type="STRING" id="83332.Rv2206"/>
<dbReference type="PaxDb" id="83332-Rv2206"/>
<dbReference type="DNASU" id="888107"/>
<dbReference type="GeneID" id="888107"/>
<dbReference type="KEGG" id="mtu:Rv2206"/>
<dbReference type="KEGG" id="mtv:RVBD_2206"/>
<dbReference type="TubercuList" id="Rv2206"/>
<dbReference type="eggNOG" id="ENOG5031D67">
    <property type="taxonomic scope" value="Bacteria"/>
</dbReference>
<dbReference type="InParanoid" id="P9WLI5"/>
<dbReference type="OrthoDB" id="5194448at2"/>
<dbReference type="Proteomes" id="UP000001584">
    <property type="component" value="Chromosome"/>
</dbReference>
<dbReference type="GO" id="GO:0005886">
    <property type="term" value="C:plasma membrane"/>
    <property type="evidence" value="ECO:0007669"/>
    <property type="project" value="UniProtKB-SubCell"/>
</dbReference>
<dbReference type="GO" id="GO:0042783">
    <property type="term" value="P:symbiont-mediated evasion of host immune response"/>
    <property type="evidence" value="ECO:0000315"/>
    <property type="project" value="MTBBASE"/>
</dbReference>
<dbReference type="InterPro" id="IPR021403">
    <property type="entry name" value="DUF3043"/>
</dbReference>
<dbReference type="Pfam" id="PF11241">
    <property type="entry name" value="DUF3043"/>
    <property type="match status" value="1"/>
</dbReference>
<comment type="subcellular location">
    <subcellularLocation>
        <location evidence="3">Cell membrane</location>
        <topology evidence="3">Multi-pass membrane protein</topology>
    </subcellularLocation>
</comment>
<gene>
    <name type="ordered locus">Rv2206</name>
    <name type="ORF">MTCY190.17</name>
</gene>
<sequence length="236" mass="26216">MKLLGHRKSHGHQRADASPDAGSKDGCRPDSGRTSGSDTSRGSQTTGPKGRPTPKRNQSRRHTKKGPVAPAPMTAAQARARRKSLAGPKLSREERRAEKAANRARMTERRERMMAGEEAYLLPRDRGPVRRYVRDVVDSRRNLLGLFMPSALTLLFVMFAVPQVQFYLSPAMLILLALMTIDAIILGRKVGRLVDTKFPSNTESRWRLGLYAAGRASQIRRLRAPRPQVERGGDVG</sequence>
<reference key="1">
    <citation type="journal article" date="1998" name="Nature">
        <title>Deciphering the biology of Mycobacterium tuberculosis from the complete genome sequence.</title>
        <authorList>
            <person name="Cole S.T."/>
            <person name="Brosch R."/>
            <person name="Parkhill J."/>
            <person name="Garnier T."/>
            <person name="Churcher C.M."/>
            <person name="Harris D.E."/>
            <person name="Gordon S.V."/>
            <person name="Eiglmeier K."/>
            <person name="Gas S."/>
            <person name="Barry C.E. III"/>
            <person name="Tekaia F."/>
            <person name="Badcock K."/>
            <person name="Basham D."/>
            <person name="Brown D."/>
            <person name="Chillingworth T."/>
            <person name="Connor R."/>
            <person name="Davies R.M."/>
            <person name="Devlin K."/>
            <person name="Feltwell T."/>
            <person name="Gentles S."/>
            <person name="Hamlin N."/>
            <person name="Holroyd S."/>
            <person name="Hornsby T."/>
            <person name="Jagels K."/>
            <person name="Krogh A."/>
            <person name="McLean J."/>
            <person name="Moule S."/>
            <person name="Murphy L.D."/>
            <person name="Oliver S."/>
            <person name="Osborne J."/>
            <person name="Quail M.A."/>
            <person name="Rajandream M.A."/>
            <person name="Rogers J."/>
            <person name="Rutter S."/>
            <person name="Seeger K."/>
            <person name="Skelton S."/>
            <person name="Squares S."/>
            <person name="Squares R."/>
            <person name="Sulston J.E."/>
            <person name="Taylor K."/>
            <person name="Whitehead S."/>
            <person name="Barrell B.G."/>
        </authorList>
    </citation>
    <scope>NUCLEOTIDE SEQUENCE [LARGE SCALE GENOMIC DNA]</scope>
    <source>
        <strain>ATCC 25618 / H37Rv</strain>
    </source>
</reference>
<reference key="2">
    <citation type="journal article" date="2011" name="Mol. Cell. Proteomics">
        <title>Proteogenomic analysis of Mycobacterium tuberculosis by high resolution mass spectrometry.</title>
        <authorList>
            <person name="Kelkar D.S."/>
            <person name="Kumar D."/>
            <person name="Kumar P."/>
            <person name="Balakrishnan L."/>
            <person name="Muthusamy B."/>
            <person name="Yadav A.K."/>
            <person name="Shrivastava P."/>
            <person name="Marimuthu A."/>
            <person name="Anand S."/>
            <person name="Sundaram H."/>
            <person name="Kingsbury R."/>
            <person name="Harsha H.C."/>
            <person name="Nair B."/>
            <person name="Prasad T.S."/>
            <person name="Chauhan D.S."/>
            <person name="Katoch K."/>
            <person name="Katoch V.M."/>
            <person name="Kumar P."/>
            <person name="Chaerkady R."/>
            <person name="Ramachandran S."/>
            <person name="Dash D."/>
            <person name="Pandey A."/>
        </authorList>
    </citation>
    <scope>IDENTIFICATION BY MASS SPECTROMETRY [LARGE SCALE ANALYSIS]</scope>
    <source>
        <strain>ATCC 25618 / H37Rv</strain>
    </source>
</reference>
<organism>
    <name type="scientific">Mycobacterium tuberculosis (strain ATCC 25618 / H37Rv)</name>
    <dbReference type="NCBI Taxonomy" id="83332"/>
    <lineage>
        <taxon>Bacteria</taxon>
        <taxon>Bacillati</taxon>
        <taxon>Actinomycetota</taxon>
        <taxon>Actinomycetes</taxon>
        <taxon>Mycobacteriales</taxon>
        <taxon>Mycobacteriaceae</taxon>
        <taxon>Mycobacterium</taxon>
        <taxon>Mycobacterium tuberculosis complex</taxon>
    </lineage>
</organism>
<accession>P9WLI5</accession>
<accession>L0TAH7</accession>
<accession>P64951</accession>
<accession>Q10395</accession>
<proteinExistence type="evidence at protein level"/>
<evidence type="ECO:0000255" key="1"/>
<evidence type="ECO:0000256" key="2">
    <source>
        <dbReference type="SAM" id="MobiDB-lite"/>
    </source>
</evidence>
<evidence type="ECO:0000305" key="3"/>
<protein>
    <recommendedName>
        <fullName>Uncharacterized protein Rv2206</fullName>
    </recommendedName>
</protein>
<feature type="chain" id="PRO_0000103974" description="Uncharacterized protein Rv2206">
    <location>
        <begin position="1"/>
        <end position="236"/>
    </location>
</feature>
<feature type="transmembrane region" description="Helical" evidence="1">
    <location>
        <begin position="142"/>
        <end position="162"/>
    </location>
</feature>
<feature type="transmembrane region" description="Helical" evidence="1">
    <location>
        <begin position="166"/>
        <end position="186"/>
    </location>
</feature>
<feature type="region of interest" description="Disordered" evidence="2">
    <location>
        <begin position="1"/>
        <end position="108"/>
    </location>
</feature>
<feature type="compositionally biased region" description="Basic residues" evidence="2">
    <location>
        <begin position="1"/>
        <end position="12"/>
    </location>
</feature>
<feature type="compositionally biased region" description="Basic and acidic residues" evidence="2">
    <location>
        <begin position="13"/>
        <end position="31"/>
    </location>
</feature>
<feature type="compositionally biased region" description="Low complexity" evidence="2">
    <location>
        <begin position="32"/>
        <end position="47"/>
    </location>
</feature>
<feature type="compositionally biased region" description="Basic residues" evidence="2">
    <location>
        <begin position="52"/>
        <end position="65"/>
    </location>
</feature>
<feature type="compositionally biased region" description="Low complexity" evidence="2">
    <location>
        <begin position="67"/>
        <end position="78"/>
    </location>
</feature>
<feature type="compositionally biased region" description="Basic and acidic residues" evidence="2">
    <location>
        <begin position="90"/>
        <end position="108"/>
    </location>
</feature>